<sequence>MDFEEMMKELEEIVNRLESEDLSLEESIELFQRGVELYKKCREILQKEQLKIIDVLKELEGDEDDAGRNQEDES</sequence>
<organism>
    <name type="scientific">Thermotoga neapolitana (strain ATCC 49049 / DSM 4359 / NBRC 107923 / NS-E)</name>
    <dbReference type="NCBI Taxonomy" id="309803"/>
    <lineage>
        <taxon>Bacteria</taxon>
        <taxon>Thermotogati</taxon>
        <taxon>Thermotogota</taxon>
        <taxon>Thermotogae</taxon>
        <taxon>Thermotogales</taxon>
        <taxon>Thermotogaceae</taxon>
        <taxon>Thermotoga</taxon>
    </lineage>
</organism>
<protein>
    <recommendedName>
        <fullName evidence="1">Exodeoxyribonuclease 7 small subunit</fullName>
        <ecNumber evidence="1">3.1.11.6</ecNumber>
    </recommendedName>
    <alternativeName>
        <fullName evidence="1">Exodeoxyribonuclease VII small subunit</fullName>
        <shortName evidence="1">Exonuclease VII small subunit</shortName>
    </alternativeName>
</protein>
<dbReference type="EC" id="3.1.11.6" evidence="1"/>
<dbReference type="EMBL" id="CP000916">
    <property type="protein sequence ID" value="ACM23135.1"/>
    <property type="molecule type" value="Genomic_DNA"/>
</dbReference>
<dbReference type="RefSeq" id="WP_015919452.1">
    <property type="nucleotide sequence ID" value="NC_011978.1"/>
</dbReference>
<dbReference type="SMR" id="B9K852"/>
<dbReference type="STRING" id="309803.CTN_0959"/>
<dbReference type="KEGG" id="tna:CTN_0959"/>
<dbReference type="eggNOG" id="COG1722">
    <property type="taxonomic scope" value="Bacteria"/>
</dbReference>
<dbReference type="HOGENOM" id="CLU_145918_3_4_0"/>
<dbReference type="Proteomes" id="UP000000445">
    <property type="component" value="Chromosome"/>
</dbReference>
<dbReference type="GO" id="GO:0005829">
    <property type="term" value="C:cytosol"/>
    <property type="evidence" value="ECO:0007669"/>
    <property type="project" value="TreeGrafter"/>
</dbReference>
<dbReference type="GO" id="GO:0009318">
    <property type="term" value="C:exodeoxyribonuclease VII complex"/>
    <property type="evidence" value="ECO:0007669"/>
    <property type="project" value="InterPro"/>
</dbReference>
<dbReference type="GO" id="GO:0008855">
    <property type="term" value="F:exodeoxyribonuclease VII activity"/>
    <property type="evidence" value="ECO:0007669"/>
    <property type="project" value="UniProtKB-UniRule"/>
</dbReference>
<dbReference type="GO" id="GO:0006308">
    <property type="term" value="P:DNA catabolic process"/>
    <property type="evidence" value="ECO:0007669"/>
    <property type="project" value="UniProtKB-UniRule"/>
</dbReference>
<dbReference type="Gene3D" id="1.10.287.1040">
    <property type="entry name" value="Exonuclease VII, small subunit"/>
    <property type="match status" value="1"/>
</dbReference>
<dbReference type="HAMAP" id="MF_00337">
    <property type="entry name" value="Exonuc_7_S"/>
    <property type="match status" value="1"/>
</dbReference>
<dbReference type="InterPro" id="IPR003761">
    <property type="entry name" value="Exonuc_VII_S"/>
</dbReference>
<dbReference type="InterPro" id="IPR037004">
    <property type="entry name" value="Exonuc_VII_ssu_sf"/>
</dbReference>
<dbReference type="NCBIfam" id="NF010673">
    <property type="entry name" value="PRK14070.1"/>
    <property type="match status" value="1"/>
</dbReference>
<dbReference type="NCBIfam" id="TIGR01280">
    <property type="entry name" value="xseB"/>
    <property type="match status" value="1"/>
</dbReference>
<dbReference type="PANTHER" id="PTHR34137">
    <property type="entry name" value="EXODEOXYRIBONUCLEASE 7 SMALL SUBUNIT"/>
    <property type="match status" value="1"/>
</dbReference>
<dbReference type="PANTHER" id="PTHR34137:SF1">
    <property type="entry name" value="EXODEOXYRIBONUCLEASE 7 SMALL SUBUNIT"/>
    <property type="match status" value="1"/>
</dbReference>
<dbReference type="Pfam" id="PF02609">
    <property type="entry name" value="Exonuc_VII_S"/>
    <property type="match status" value="1"/>
</dbReference>
<dbReference type="PIRSF" id="PIRSF006488">
    <property type="entry name" value="Exonuc_VII_S"/>
    <property type="match status" value="1"/>
</dbReference>
<dbReference type="SUPFAM" id="SSF116842">
    <property type="entry name" value="XseB-like"/>
    <property type="match status" value="1"/>
</dbReference>
<keyword id="KW-0963">Cytoplasm</keyword>
<keyword id="KW-0269">Exonuclease</keyword>
<keyword id="KW-0378">Hydrolase</keyword>
<keyword id="KW-0540">Nuclease</keyword>
<reference key="1">
    <citation type="submission" date="2007-11" db="EMBL/GenBank/DDBJ databases">
        <title>The genome sequence of the hyperthermophilic bacterium Thermotoga neapolitana.</title>
        <authorList>
            <person name="Lim S.K."/>
            <person name="Kim J.S."/>
            <person name="Cha S.H."/>
            <person name="Park B.C."/>
            <person name="Lee D.S."/>
            <person name="Tae H.S."/>
            <person name="Kim S.-J."/>
            <person name="Kim J.J."/>
            <person name="Park K.J."/>
            <person name="Lee S.Y."/>
        </authorList>
    </citation>
    <scope>NUCLEOTIDE SEQUENCE [LARGE SCALE GENOMIC DNA]</scope>
    <source>
        <strain>ATCC 49049 / DSM 4359 / NBRC 107923 / NS-E</strain>
    </source>
</reference>
<name>EX7S_THENN</name>
<proteinExistence type="inferred from homology"/>
<evidence type="ECO:0000255" key="1">
    <source>
        <dbReference type="HAMAP-Rule" id="MF_00337"/>
    </source>
</evidence>
<accession>B9K852</accession>
<feature type="chain" id="PRO_1000200268" description="Exodeoxyribonuclease 7 small subunit">
    <location>
        <begin position="1"/>
        <end position="74"/>
    </location>
</feature>
<gene>
    <name evidence="1" type="primary">xseB</name>
    <name type="ordered locus">CTN_0959</name>
</gene>
<comment type="function">
    <text evidence="1">Bidirectionally degrades single-stranded DNA into large acid-insoluble oligonucleotides, which are then degraded further into small acid-soluble oligonucleotides.</text>
</comment>
<comment type="catalytic activity">
    <reaction evidence="1">
        <text>Exonucleolytic cleavage in either 5'- to 3'- or 3'- to 5'-direction to yield nucleoside 5'-phosphates.</text>
        <dbReference type="EC" id="3.1.11.6"/>
    </reaction>
</comment>
<comment type="subunit">
    <text evidence="1">Heterooligomer composed of large and small subunits.</text>
</comment>
<comment type="subcellular location">
    <subcellularLocation>
        <location evidence="1">Cytoplasm</location>
    </subcellularLocation>
</comment>
<comment type="similarity">
    <text evidence="1">Belongs to the XseB family.</text>
</comment>